<organism>
    <name type="scientific">Mus musculus</name>
    <name type="common">Mouse</name>
    <dbReference type="NCBI Taxonomy" id="10090"/>
    <lineage>
        <taxon>Eukaryota</taxon>
        <taxon>Metazoa</taxon>
        <taxon>Chordata</taxon>
        <taxon>Craniata</taxon>
        <taxon>Vertebrata</taxon>
        <taxon>Euteleostomi</taxon>
        <taxon>Mammalia</taxon>
        <taxon>Eutheria</taxon>
        <taxon>Euarchontoglires</taxon>
        <taxon>Glires</taxon>
        <taxon>Rodentia</taxon>
        <taxon>Myomorpha</taxon>
        <taxon>Muroidea</taxon>
        <taxon>Muridae</taxon>
        <taxon>Murinae</taxon>
        <taxon>Mus</taxon>
        <taxon>Mus</taxon>
    </lineage>
</organism>
<dbReference type="EC" id="2.7.4.8" evidence="7"/>
<dbReference type="EMBL" id="U53514">
    <property type="protein sequence ID" value="AAC52652.1"/>
    <property type="molecule type" value="mRNA"/>
</dbReference>
<dbReference type="EMBL" id="AK013514">
    <property type="protein sequence ID" value="BAB28891.1"/>
    <property type="molecule type" value="mRNA"/>
</dbReference>
<dbReference type="EMBL" id="AK004205">
    <property type="protein sequence ID" value="BAB23219.2"/>
    <property type="molecule type" value="mRNA"/>
</dbReference>
<dbReference type="EMBL" id="AL645854">
    <property type="status" value="NOT_ANNOTATED_CDS"/>
    <property type="molecule type" value="Genomic_DNA"/>
</dbReference>
<dbReference type="EMBL" id="CH466628">
    <property type="protein sequence ID" value="EDL07674.1"/>
    <property type="molecule type" value="Genomic_DNA"/>
</dbReference>
<dbReference type="EMBL" id="CH466628">
    <property type="protein sequence ID" value="EDL07676.1"/>
    <property type="molecule type" value="Genomic_DNA"/>
</dbReference>
<dbReference type="EMBL" id="BC024625">
    <property type="protein sequence ID" value="AAH24625.1"/>
    <property type="molecule type" value="mRNA"/>
</dbReference>
<dbReference type="CCDS" id="CCDS24762.2">
    <molecule id="Q64520-2"/>
</dbReference>
<dbReference type="RefSeq" id="NP_001152882.1">
    <property type="nucleotide sequence ID" value="NM_001159410.1"/>
</dbReference>
<dbReference type="RefSeq" id="NP_001390764.1">
    <molecule id="Q64520-1"/>
    <property type="nucleotide sequence ID" value="NM_001403835.1"/>
</dbReference>
<dbReference type="RefSeq" id="NP_001390765.1">
    <molecule id="Q64520-1"/>
    <property type="nucleotide sequence ID" value="NM_001403836.1"/>
</dbReference>
<dbReference type="RefSeq" id="NP_032219.2">
    <molecule id="Q64520-2"/>
    <property type="nucleotide sequence ID" value="NM_008193.4"/>
</dbReference>
<dbReference type="RefSeq" id="XP_006532308.1">
    <property type="nucleotide sequence ID" value="XM_006532245.3"/>
</dbReference>
<dbReference type="RefSeq" id="XP_006532309.1">
    <molecule id="Q64520-1"/>
    <property type="nucleotide sequence ID" value="XM_006532246.2"/>
</dbReference>
<dbReference type="PDB" id="1LVG">
    <property type="method" value="X-ray"/>
    <property type="resolution" value="2.10 A"/>
    <property type="chains" value="A=1-198"/>
</dbReference>
<dbReference type="PDBsum" id="1LVG"/>
<dbReference type="SMR" id="Q64520"/>
<dbReference type="BioGRID" id="200128">
    <property type="interactions" value="7"/>
</dbReference>
<dbReference type="FunCoup" id="Q64520">
    <property type="interactions" value="1831"/>
</dbReference>
<dbReference type="IntAct" id="Q64520">
    <property type="interactions" value="1"/>
</dbReference>
<dbReference type="STRING" id="10090.ENSMUSP00000127566"/>
<dbReference type="iPTMnet" id="Q64520"/>
<dbReference type="PhosphoSitePlus" id="Q64520"/>
<dbReference type="SwissPalm" id="Q64520"/>
<dbReference type="jPOST" id="Q64520"/>
<dbReference type="PaxDb" id="10090-ENSMUSP00000127566"/>
<dbReference type="ProteomicsDB" id="263433">
    <molecule id="Q64520-1"/>
</dbReference>
<dbReference type="ProteomicsDB" id="334633"/>
<dbReference type="Pumba" id="Q64520"/>
<dbReference type="Antibodypedia" id="34661">
    <property type="antibodies" value="262 antibodies from 23 providers"/>
</dbReference>
<dbReference type="DNASU" id="14923"/>
<dbReference type="Ensembl" id="ENSMUST00000170202.9">
    <molecule id="Q64520-2"/>
    <property type="protein sequence ID" value="ENSMUSP00000127566.3"/>
    <property type="gene ID" value="ENSMUSG00000020444.21"/>
</dbReference>
<dbReference type="Ensembl" id="ENSMUST00000172714.3">
    <molecule id="Q64520-1"/>
    <property type="protein sequence ID" value="ENSMUSP00000134236.3"/>
    <property type="gene ID" value="ENSMUSG00000020444.21"/>
</dbReference>
<dbReference type="Ensembl" id="ENSMUST00000240589.1">
    <molecule id="Q64520-1"/>
    <property type="protein sequence ID" value="ENSMUSP00000159496.1"/>
    <property type="gene ID" value="ENSMUSG00000020444.21"/>
</dbReference>
<dbReference type="GeneID" id="14923"/>
<dbReference type="KEGG" id="mmu:14923"/>
<dbReference type="UCSC" id="uc007jdg.2">
    <property type="organism name" value="mouse"/>
</dbReference>
<dbReference type="AGR" id="MGI:95871"/>
<dbReference type="CTD" id="2987"/>
<dbReference type="MGI" id="MGI:95871">
    <property type="gene designation" value="Guk1"/>
</dbReference>
<dbReference type="VEuPathDB" id="HostDB:ENSMUSG00000020444"/>
<dbReference type="eggNOG" id="KOG0707">
    <property type="taxonomic scope" value="Eukaryota"/>
</dbReference>
<dbReference type="GeneTree" id="ENSGT00940000155815"/>
<dbReference type="InParanoid" id="Q64520"/>
<dbReference type="OMA" id="EWAVVHG"/>
<dbReference type="OrthoDB" id="6334211at2759"/>
<dbReference type="TreeFam" id="TF314473"/>
<dbReference type="BRENDA" id="2.7.4.8">
    <property type="organism ID" value="3474"/>
</dbReference>
<dbReference type="Reactome" id="R-MMU-499943">
    <property type="pathway name" value="Interconversion of nucleotide di- and triphosphates"/>
</dbReference>
<dbReference type="Reactome" id="R-MMU-9748787">
    <property type="pathway name" value="Azathioprine ADME"/>
</dbReference>
<dbReference type="BioGRID-ORCS" id="14923">
    <property type="hits" value="26 hits in 84 CRISPR screens"/>
</dbReference>
<dbReference type="ChiTaRS" id="Guk1">
    <property type="organism name" value="mouse"/>
</dbReference>
<dbReference type="EvolutionaryTrace" id="Q64520"/>
<dbReference type="PRO" id="PR:Q64520"/>
<dbReference type="Proteomes" id="UP000000589">
    <property type="component" value="Chromosome 11"/>
</dbReference>
<dbReference type="RNAct" id="Q64520">
    <property type="molecule type" value="protein"/>
</dbReference>
<dbReference type="Bgee" id="ENSMUSG00000020444">
    <property type="expression patterns" value="Expressed in retinal neural layer and 277 other cell types or tissues"/>
</dbReference>
<dbReference type="ExpressionAtlas" id="Q64520">
    <property type="expression patterns" value="baseline and differential"/>
</dbReference>
<dbReference type="GO" id="GO:0005829">
    <property type="term" value="C:cytosol"/>
    <property type="evidence" value="ECO:0000314"/>
    <property type="project" value="UniProtKB"/>
</dbReference>
<dbReference type="GO" id="GO:0005739">
    <property type="term" value="C:mitochondrion"/>
    <property type="evidence" value="ECO:0000250"/>
    <property type="project" value="UniProtKB"/>
</dbReference>
<dbReference type="GO" id="GO:0001917">
    <property type="term" value="C:photoreceptor inner segment"/>
    <property type="evidence" value="ECO:0000314"/>
    <property type="project" value="UniProtKB"/>
</dbReference>
<dbReference type="GO" id="GO:0005524">
    <property type="term" value="F:ATP binding"/>
    <property type="evidence" value="ECO:0000314"/>
    <property type="project" value="UniProtKB"/>
</dbReference>
<dbReference type="GO" id="GO:0004385">
    <property type="term" value="F:guanylate kinase activity"/>
    <property type="evidence" value="ECO:0000314"/>
    <property type="project" value="UniProtKB"/>
</dbReference>
<dbReference type="GO" id="GO:0006185">
    <property type="term" value="P:dGDP biosynthetic process"/>
    <property type="evidence" value="ECO:0007669"/>
    <property type="project" value="Ensembl"/>
</dbReference>
<dbReference type="GO" id="GO:0006163">
    <property type="term" value="P:purine nucleotide metabolic process"/>
    <property type="evidence" value="ECO:0000314"/>
    <property type="project" value="UniProtKB"/>
</dbReference>
<dbReference type="GO" id="GO:0006805">
    <property type="term" value="P:xenobiotic metabolic process"/>
    <property type="evidence" value="ECO:0007669"/>
    <property type="project" value="Ensembl"/>
</dbReference>
<dbReference type="CDD" id="cd00071">
    <property type="entry name" value="GMPK"/>
    <property type="match status" value="1"/>
</dbReference>
<dbReference type="FunFam" id="3.30.63.10:FF:000002">
    <property type="entry name" value="Guanylate kinase 1"/>
    <property type="match status" value="1"/>
</dbReference>
<dbReference type="FunFam" id="3.40.50.300:FF:000879">
    <property type="entry name" value="Guanylate kinase 1"/>
    <property type="match status" value="1"/>
</dbReference>
<dbReference type="Gene3D" id="3.30.63.10">
    <property type="entry name" value="Guanylate Kinase phosphate binding domain"/>
    <property type="match status" value="1"/>
</dbReference>
<dbReference type="Gene3D" id="3.40.50.300">
    <property type="entry name" value="P-loop containing nucleotide triphosphate hydrolases"/>
    <property type="match status" value="1"/>
</dbReference>
<dbReference type="InterPro" id="IPR008145">
    <property type="entry name" value="GK/Ca_channel_bsu"/>
</dbReference>
<dbReference type="InterPro" id="IPR008144">
    <property type="entry name" value="Guanylate_kin-like_dom"/>
</dbReference>
<dbReference type="InterPro" id="IPR017665">
    <property type="entry name" value="Guanylate_kinase"/>
</dbReference>
<dbReference type="InterPro" id="IPR020590">
    <property type="entry name" value="Guanylate_kinase_CS"/>
</dbReference>
<dbReference type="InterPro" id="IPR027417">
    <property type="entry name" value="P-loop_NTPase"/>
</dbReference>
<dbReference type="NCBIfam" id="TIGR03263">
    <property type="entry name" value="guanyl_kin"/>
    <property type="match status" value="1"/>
</dbReference>
<dbReference type="PANTHER" id="PTHR23117:SF13">
    <property type="entry name" value="GUANYLATE KINASE"/>
    <property type="match status" value="1"/>
</dbReference>
<dbReference type="PANTHER" id="PTHR23117">
    <property type="entry name" value="GUANYLATE KINASE-RELATED"/>
    <property type="match status" value="1"/>
</dbReference>
<dbReference type="Pfam" id="PF00625">
    <property type="entry name" value="Guanylate_kin"/>
    <property type="match status" value="1"/>
</dbReference>
<dbReference type="SMART" id="SM00072">
    <property type="entry name" value="GuKc"/>
    <property type="match status" value="1"/>
</dbReference>
<dbReference type="SUPFAM" id="SSF52540">
    <property type="entry name" value="P-loop containing nucleoside triphosphate hydrolases"/>
    <property type="match status" value="1"/>
</dbReference>
<dbReference type="PROSITE" id="PS00856">
    <property type="entry name" value="GUANYLATE_KINASE_1"/>
    <property type="match status" value="1"/>
</dbReference>
<dbReference type="PROSITE" id="PS50052">
    <property type="entry name" value="GUANYLATE_KINASE_2"/>
    <property type="match status" value="1"/>
</dbReference>
<reference key="1">
    <citation type="journal article" date="1996" name="J. Biol. Chem.">
        <title>Cloning, characterization, and modeling of mouse and human guanylate kinases.</title>
        <authorList>
            <person name="Brady W.A."/>
            <person name="Kokoris M.S."/>
            <person name="Fitzgibbon M."/>
            <person name="Black M.E."/>
        </authorList>
    </citation>
    <scope>NUCLEOTIDE SEQUENCE [MRNA] (ISOFORM 1)</scope>
    <scope>TISSUE SPECIFICITY</scope>
    <scope>CATALYTIC ACTIVITY</scope>
    <scope>FUNCTION</scope>
</reference>
<reference key="2">
    <citation type="journal article" date="2005" name="Science">
        <title>The transcriptional landscape of the mammalian genome.</title>
        <authorList>
            <person name="Carninci P."/>
            <person name="Kasukawa T."/>
            <person name="Katayama S."/>
            <person name="Gough J."/>
            <person name="Frith M.C."/>
            <person name="Maeda N."/>
            <person name="Oyama R."/>
            <person name="Ravasi T."/>
            <person name="Lenhard B."/>
            <person name="Wells C."/>
            <person name="Kodzius R."/>
            <person name="Shimokawa K."/>
            <person name="Bajic V.B."/>
            <person name="Brenner S.E."/>
            <person name="Batalov S."/>
            <person name="Forrest A.R."/>
            <person name="Zavolan M."/>
            <person name="Davis M.J."/>
            <person name="Wilming L.G."/>
            <person name="Aidinis V."/>
            <person name="Allen J.E."/>
            <person name="Ambesi-Impiombato A."/>
            <person name="Apweiler R."/>
            <person name="Aturaliya R.N."/>
            <person name="Bailey T.L."/>
            <person name="Bansal M."/>
            <person name="Baxter L."/>
            <person name="Beisel K.W."/>
            <person name="Bersano T."/>
            <person name="Bono H."/>
            <person name="Chalk A.M."/>
            <person name="Chiu K.P."/>
            <person name="Choudhary V."/>
            <person name="Christoffels A."/>
            <person name="Clutterbuck D.R."/>
            <person name="Crowe M.L."/>
            <person name="Dalla E."/>
            <person name="Dalrymple B.P."/>
            <person name="de Bono B."/>
            <person name="Della Gatta G."/>
            <person name="di Bernardo D."/>
            <person name="Down T."/>
            <person name="Engstrom P."/>
            <person name="Fagiolini M."/>
            <person name="Faulkner G."/>
            <person name="Fletcher C.F."/>
            <person name="Fukushima T."/>
            <person name="Furuno M."/>
            <person name="Futaki S."/>
            <person name="Gariboldi M."/>
            <person name="Georgii-Hemming P."/>
            <person name="Gingeras T.R."/>
            <person name="Gojobori T."/>
            <person name="Green R.E."/>
            <person name="Gustincich S."/>
            <person name="Harbers M."/>
            <person name="Hayashi Y."/>
            <person name="Hensch T.K."/>
            <person name="Hirokawa N."/>
            <person name="Hill D."/>
            <person name="Huminiecki L."/>
            <person name="Iacono M."/>
            <person name="Ikeo K."/>
            <person name="Iwama A."/>
            <person name="Ishikawa T."/>
            <person name="Jakt M."/>
            <person name="Kanapin A."/>
            <person name="Katoh M."/>
            <person name="Kawasawa Y."/>
            <person name="Kelso J."/>
            <person name="Kitamura H."/>
            <person name="Kitano H."/>
            <person name="Kollias G."/>
            <person name="Krishnan S.P."/>
            <person name="Kruger A."/>
            <person name="Kummerfeld S.K."/>
            <person name="Kurochkin I.V."/>
            <person name="Lareau L.F."/>
            <person name="Lazarevic D."/>
            <person name="Lipovich L."/>
            <person name="Liu J."/>
            <person name="Liuni S."/>
            <person name="McWilliam S."/>
            <person name="Madan Babu M."/>
            <person name="Madera M."/>
            <person name="Marchionni L."/>
            <person name="Matsuda H."/>
            <person name="Matsuzawa S."/>
            <person name="Miki H."/>
            <person name="Mignone F."/>
            <person name="Miyake S."/>
            <person name="Morris K."/>
            <person name="Mottagui-Tabar S."/>
            <person name="Mulder N."/>
            <person name="Nakano N."/>
            <person name="Nakauchi H."/>
            <person name="Ng P."/>
            <person name="Nilsson R."/>
            <person name="Nishiguchi S."/>
            <person name="Nishikawa S."/>
            <person name="Nori F."/>
            <person name="Ohara O."/>
            <person name="Okazaki Y."/>
            <person name="Orlando V."/>
            <person name="Pang K.C."/>
            <person name="Pavan W.J."/>
            <person name="Pavesi G."/>
            <person name="Pesole G."/>
            <person name="Petrovsky N."/>
            <person name="Piazza S."/>
            <person name="Reed J."/>
            <person name="Reid J.F."/>
            <person name="Ring B.Z."/>
            <person name="Ringwald M."/>
            <person name="Rost B."/>
            <person name="Ruan Y."/>
            <person name="Salzberg S.L."/>
            <person name="Sandelin A."/>
            <person name="Schneider C."/>
            <person name="Schoenbach C."/>
            <person name="Sekiguchi K."/>
            <person name="Semple C.A."/>
            <person name="Seno S."/>
            <person name="Sessa L."/>
            <person name="Sheng Y."/>
            <person name="Shibata Y."/>
            <person name="Shimada H."/>
            <person name="Shimada K."/>
            <person name="Silva D."/>
            <person name="Sinclair B."/>
            <person name="Sperling S."/>
            <person name="Stupka E."/>
            <person name="Sugiura K."/>
            <person name="Sultana R."/>
            <person name="Takenaka Y."/>
            <person name="Taki K."/>
            <person name="Tammoja K."/>
            <person name="Tan S.L."/>
            <person name="Tang S."/>
            <person name="Taylor M.S."/>
            <person name="Tegner J."/>
            <person name="Teichmann S.A."/>
            <person name="Ueda H.R."/>
            <person name="van Nimwegen E."/>
            <person name="Verardo R."/>
            <person name="Wei C.L."/>
            <person name="Yagi K."/>
            <person name="Yamanishi H."/>
            <person name="Zabarovsky E."/>
            <person name="Zhu S."/>
            <person name="Zimmer A."/>
            <person name="Hide W."/>
            <person name="Bult C."/>
            <person name="Grimmond S.M."/>
            <person name="Teasdale R.D."/>
            <person name="Liu E.T."/>
            <person name="Brusic V."/>
            <person name="Quackenbush J."/>
            <person name="Wahlestedt C."/>
            <person name="Mattick J.S."/>
            <person name="Hume D.A."/>
            <person name="Kai C."/>
            <person name="Sasaki D."/>
            <person name="Tomaru Y."/>
            <person name="Fukuda S."/>
            <person name="Kanamori-Katayama M."/>
            <person name="Suzuki M."/>
            <person name="Aoki J."/>
            <person name="Arakawa T."/>
            <person name="Iida J."/>
            <person name="Imamura K."/>
            <person name="Itoh M."/>
            <person name="Kato T."/>
            <person name="Kawaji H."/>
            <person name="Kawagashira N."/>
            <person name="Kawashima T."/>
            <person name="Kojima M."/>
            <person name="Kondo S."/>
            <person name="Konno H."/>
            <person name="Nakano K."/>
            <person name="Ninomiya N."/>
            <person name="Nishio T."/>
            <person name="Okada M."/>
            <person name="Plessy C."/>
            <person name="Shibata K."/>
            <person name="Shiraki T."/>
            <person name="Suzuki S."/>
            <person name="Tagami M."/>
            <person name="Waki K."/>
            <person name="Watahiki A."/>
            <person name="Okamura-Oho Y."/>
            <person name="Suzuki H."/>
            <person name="Kawai J."/>
            <person name="Hayashizaki Y."/>
        </authorList>
    </citation>
    <scope>NUCLEOTIDE SEQUENCE [LARGE SCALE MRNA] (ISOFORMS 1 AND 2)</scope>
    <source>
        <strain>C57BL/6J</strain>
        <tissue>Hippocampus</tissue>
    </source>
</reference>
<reference key="3">
    <citation type="journal article" date="2009" name="PLoS Biol.">
        <title>Lineage-specific biology revealed by a finished genome assembly of the mouse.</title>
        <authorList>
            <person name="Church D.M."/>
            <person name="Goodstadt L."/>
            <person name="Hillier L.W."/>
            <person name="Zody M.C."/>
            <person name="Goldstein S."/>
            <person name="She X."/>
            <person name="Bult C.J."/>
            <person name="Agarwala R."/>
            <person name="Cherry J.L."/>
            <person name="DiCuccio M."/>
            <person name="Hlavina W."/>
            <person name="Kapustin Y."/>
            <person name="Meric P."/>
            <person name="Maglott D."/>
            <person name="Birtle Z."/>
            <person name="Marques A.C."/>
            <person name="Graves T."/>
            <person name="Zhou S."/>
            <person name="Teague B."/>
            <person name="Potamousis K."/>
            <person name="Churas C."/>
            <person name="Place M."/>
            <person name="Herschleb J."/>
            <person name="Runnheim R."/>
            <person name="Forrest D."/>
            <person name="Amos-Landgraf J."/>
            <person name="Schwartz D.C."/>
            <person name="Cheng Z."/>
            <person name="Lindblad-Toh K."/>
            <person name="Eichler E.E."/>
            <person name="Ponting C.P."/>
        </authorList>
    </citation>
    <scope>NUCLEOTIDE SEQUENCE [LARGE SCALE GENOMIC DNA]</scope>
    <source>
        <strain>C57BL/6J</strain>
    </source>
</reference>
<reference key="4">
    <citation type="submission" date="2005-09" db="EMBL/GenBank/DDBJ databases">
        <authorList>
            <person name="Mural R.J."/>
            <person name="Adams M.D."/>
            <person name="Myers E.W."/>
            <person name="Smith H.O."/>
            <person name="Venter J.C."/>
        </authorList>
    </citation>
    <scope>NUCLEOTIDE SEQUENCE [LARGE SCALE GENOMIC DNA]</scope>
</reference>
<reference key="5">
    <citation type="journal article" date="2004" name="Genome Res.">
        <title>The status, quality, and expansion of the NIH full-length cDNA project: the Mammalian Gene Collection (MGC).</title>
        <authorList>
            <consortium name="The MGC Project Team"/>
        </authorList>
    </citation>
    <scope>NUCLEOTIDE SEQUENCE [LARGE SCALE MRNA] (ISOFORM 1)</scope>
    <source>
        <strain>FVB/N</strain>
        <tissue>Mammary gland</tissue>
    </source>
</reference>
<reference key="6">
    <citation type="journal article" date="2010" name="Cell">
        <title>A tissue-specific atlas of mouse protein phosphorylation and expression.</title>
        <authorList>
            <person name="Huttlin E.L."/>
            <person name="Jedrychowski M.P."/>
            <person name="Elias J.E."/>
            <person name="Goswami T."/>
            <person name="Rad R."/>
            <person name="Beausoleil S.A."/>
            <person name="Villen J."/>
            <person name="Haas W."/>
            <person name="Sowa M.E."/>
            <person name="Gygi S.P."/>
        </authorList>
    </citation>
    <scope>IDENTIFICATION BY MASS SPECTROMETRY [LARGE SCALE ANALYSIS]</scope>
    <source>
        <tissue>Brain</tissue>
        <tissue>Brown adipose tissue</tissue>
        <tissue>Heart</tissue>
        <tissue>Kidney</tissue>
        <tissue>Liver</tissue>
        <tissue>Lung</tissue>
        <tissue>Pancreas</tissue>
        <tissue>Spleen</tissue>
        <tissue>Testis</tissue>
    </source>
</reference>
<reference key="7">
    <citation type="journal article" date="2018" name="Front. Mol. Neurosci.">
        <title>Control of the Nucleotide Cycle in Photoreceptor Cell Extracts by Retinal Degeneration Protein 3.</title>
        <authorList>
            <person name="Wimberg H."/>
            <person name="Janssen-Bienhold U."/>
            <person name="Koch K.W."/>
        </authorList>
    </citation>
    <scope>TISSUE SPECIFICITY</scope>
    <scope>SUBCELLULAR LOCATION</scope>
</reference>
<reference key="8">
    <citation type="journal article" date="2002" name="J. Biol. Chem.">
        <title>Structural characterization of the closed conformation of mouse guanylate kinase.</title>
        <authorList>
            <person name="Sekulic N."/>
            <person name="Shuvalova L."/>
            <person name="Spangenberg O."/>
            <person name="Konrad M."/>
            <person name="Lavie A."/>
        </authorList>
    </citation>
    <scope>X-RAY CRYSTALLOGRAPHY (2.1 ANGSTROMS) IN COMPLEX WITH ATP AND GMP ANALOG</scope>
    <scope>ACTIVE SITE</scope>
</reference>
<comment type="function">
    <text evidence="2 7">Catalyzes the phosphorylation of GMP to GDP. Essential enzyme for recycling GMP and indirectly, cyclic GMP (cGMP) (PubMed:8663313). Involved in the cGMP metabolism in photoreceptors (By similarity).</text>
</comment>
<comment type="catalytic activity">
    <reaction evidence="7">
        <text>GMP + ATP = GDP + ADP</text>
        <dbReference type="Rhea" id="RHEA:20780"/>
        <dbReference type="ChEBI" id="CHEBI:30616"/>
        <dbReference type="ChEBI" id="CHEBI:58115"/>
        <dbReference type="ChEBI" id="CHEBI:58189"/>
        <dbReference type="ChEBI" id="CHEBI:456216"/>
        <dbReference type="EC" id="2.7.4.8"/>
    </reaction>
</comment>
<comment type="subunit">
    <text evidence="1 3">Monomer (By similarity). Interacts with RD3 (By similarity).</text>
</comment>
<comment type="subcellular location">
    <subcellularLocation>
        <location evidence="6">Photoreceptor inner segment</location>
    </subcellularLocation>
    <subcellularLocation>
        <location evidence="6">Cytoplasm</location>
        <location evidence="6">Cytosol</location>
    </subcellularLocation>
    <text evidence="6">Colocalizes with RD3 in photoreceptor inner segments and to a lesser extent in the outer plexiform layer.</text>
</comment>
<comment type="subcellular location">
    <molecule>Isoform 2</molecule>
    <subcellularLocation>
        <location evidence="3">Mitochondrion</location>
    </subcellularLocation>
</comment>
<comment type="alternative products">
    <event type="alternative splicing"/>
    <isoform>
        <id>Q64520-1</id>
        <name>1</name>
        <sequence type="displayed"/>
    </isoform>
    <isoform>
        <id>Q64520-2</id>
        <name>2</name>
        <sequence type="described" ref="VSP_060370"/>
    </isoform>
</comment>
<comment type="tissue specificity">
    <text evidence="6 7">Widely expressed (PubMed:8663313). In retina is expressed in inner segment, outer nuclear layer, outer plexiform layer, inner plexiform layer, and ganglion cell layer (at protein level) (PubMed:29515371).</text>
</comment>
<comment type="similarity">
    <text evidence="10">Belongs to the guanylate kinase family.</text>
</comment>
<name>KGUA_MOUSE</name>
<protein>
    <recommendedName>
        <fullName>Guanylate kinase</fullName>
        <ecNumber evidence="7">2.7.4.8</ecNumber>
    </recommendedName>
    <alternativeName>
        <fullName evidence="8">GMP kinase</fullName>
    </alternativeName>
    <alternativeName>
        <fullName>Guanylate kinase 1</fullName>
    </alternativeName>
</protein>
<sequence length="198" mass="21918">MAGPRPVVLSGPSGAGKSTLLKKLFQEHSSIFGFSVSHTTRNPRPGEEDGKDYYFVTREMMQRDIAAGDFIEHAEFSGNLYGTSKEAVRAVQAMNRICVLDVDLQGVRSIKKTDLCPIYIFVQPPSLDVLEQRLRLRNTETEESLAKRLAAARTDMESSKEPGLFDLVIINDDLDKAYATLKQALSEEIKKAQGTGHA</sequence>
<gene>
    <name evidence="12" type="primary">Guk1</name>
    <name evidence="9" type="synonym">Gmk</name>
</gene>
<feature type="chain" id="PRO_0000170652" description="Guanylate kinase">
    <location>
        <begin position="1"/>
        <end position="198"/>
    </location>
</feature>
<feature type="domain" description="Guanylate kinase-like" evidence="4">
    <location>
        <begin position="4"/>
        <end position="186"/>
    </location>
</feature>
<feature type="active site" evidence="11 13">
    <location>
        <position position="44"/>
    </location>
</feature>
<feature type="active site" evidence="11 13">
    <location>
        <position position="137"/>
    </location>
</feature>
<feature type="active site" evidence="11 13">
    <location>
        <position position="148"/>
    </location>
</feature>
<feature type="binding site" evidence="5 13">
    <location>
        <begin position="14"/>
        <end position="19"/>
    </location>
    <ligand>
        <name>ATP</name>
        <dbReference type="ChEBI" id="CHEBI:30616"/>
    </ligand>
</feature>
<feature type="binding site" evidence="5 13">
    <location>
        <begin position="37"/>
        <end position="51"/>
    </location>
    <ligand>
        <name>substrate</name>
    </ligand>
</feature>
<feature type="binding site" evidence="5 13">
    <location>
        <begin position="171"/>
        <end position="172"/>
    </location>
    <ligand>
        <name>ATP</name>
        <dbReference type="ChEBI" id="CHEBI:30616"/>
    </ligand>
</feature>
<feature type="splice variant" id="VSP_060370" description="In isoform 2.">
    <original>M</original>
    <variation>MLRRPLVGLAVAALGRVPADGM</variation>
    <location>
        <position position="1"/>
    </location>
</feature>
<feature type="strand" evidence="14">
    <location>
        <begin position="7"/>
        <end position="10"/>
    </location>
</feature>
<feature type="helix" evidence="14">
    <location>
        <begin position="17"/>
        <end position="28"/>
    </location>
</feature>
<feature type="turn" evidence="14">
    <location>
        <begin position="29"/>
        <end position="31"/>
    </location>
</feature>
<feature type="strand" evidence="14">
    <location>
        <begin position="32"/>
        <end position="34"/>
    </location>
</feature>
<feature type="turn" evidence="14">
    <location>
        <begin position="49"/>
        <end position="51"/>
    </location>
</feature>
<feature type="helix" evidence="14">
    <location>
        <begin position="58"/>
        <end position="67"/>
    </location>
</feature>
<feature type="strand" evidence="14">
    <location>
        <begin position="70"/>
        <end position="76"/>
    </location>
</feature>
<feature type="strand" evidence="14">
    <location>
        <begin position="79"/>
        <end position="84"/>
    </location>
</feature>
<feature type="helix" evidence="14">
    <location>
        <begin position="85"/>
        <end position="93"/>
    </location>
</feature>
<feature type="strand" evidence="14">
    <location>
        <begin position="97"/>
        <end position="101"/>
    </location>
</feature>
<feature type="helix" evidence="14">
    <location>
        <begin position="104"/>
        <end position="110"/>
    </location>
</feature>
<feature type="strand" evidence="14">
    <location>
        <begin position="118"/>
        <end position="123"/>
    </location>
</feature>
<feature type="helix" evidence="14">
    <location>
        <begin position="127"/>
        <end position="137"/>
    </location>
</feature>
<feature type="helix" evidence="14">
    <location>
        <begin position="142"/>
        <end position="155"/>
    </location>
</feature>
<feature type="helix" evidence="14">
    <location>
        <begin position="156"/>
        <end position="160"/>
    </location>
</feature>
<feature type="turn" evidence="14">
    <location>
        <begin position="162"/>
        <end position="164"/>
    </location>
</feature>
<feature type="strand" evidence="14">
    <location>
        <begin position="166"/>
        <end position="170"/>
    </location>
</feature>
<feature type="helix" evidence="14">
    <location>
        <begin position="174"/>
        <end position="184"/>
    </location>
</feature>
<feature type="helix" evidence="14">
    <location>
        <begin position="186"/>
        <end position="191"/>
    </location>
</feature>
<evidence type="ECO:0000250" key="1">
    <source>
        <dbReference type="UniProtKB" id="P31006"/>
    </source>
</evidence>
<evidence type="ECO:0000250" key="2">
    <source>
        <dbReference type="UniProtKB" id="P46195"/>
    </source>
</evidence>
<evidence type="ECO:0000250" key="3">
    <source>
        <dbReference type="UniProtKB" id="Q16774"/>
    </source>
</evidence>
<evidence type="ECO:0000255" key="4">
    <source>
        <dbReference type="PROSITE-ProRule" id="PRU00100"/>
    </source>
</evidence>
<evidence type="ECO:0000269" key="5">
    <source>
    </source>
</evidence>
<evidence type="ECO:0000269" key="6">
    <source>
    </source>
</evidence>
<evidence type="ECO:0000269" key="7">
    <source>
    </source>
</evidence>
<evidence type="ECO:0000303" key="8">
    <source>
    </source>
</evidence>
<evidence type="ECO:0000303" key="9">
    <source>
    </source>
</evidence>
<evidence type="ECO:0000305" key="10"/>
<evidence type="ECO:0000305" key="11">
    <source>
    </source>
</evidence>
<evidence type="ECO:0000312" key="12">
    <source>
        <dbReference type="MGI" id="MGI:95871"/>
    </source>
</evidence>
<evidence type="ECO:0007744" key="13">
    <source>
        <dbReference type="PDB" id="1LVG"/>
    </source>
</evidence>
<evidence type="ECO:0007829" key="14">
    <source>
        <dbReference type="PDB" id="1LVG"/>
    </source>
</evidence>
<keyword id="KW-0002">3D-structure</keyword>
<keyword id="KW-0025">Alternative splicing</keyword>
<keyword id="KW-0067">ATP-binding</keyword>
<keyword id="KW-0963">Cytoplasm</keyword>
<keyword id="KW-0418">Kinase</keyword>
<keyword id="KW-0496">Mitochondrion</keyword>
<keyword id="KW-0547">Nucleotide-binding</keyword>
<keyword id="KW-1185">Reference proteome</keyword>
<keyword id="KW-0808">Transferase</keyword>
<proteinExistence type="evidence at protein level"/>
<accession>Q64520</accession>
<accession>Q564F2</accession>
<accession>Q564G0</accession>